<proteinExistence type="inferred from homology"/>
<comment type="similarity">
    <text evidence="1">Belongs to the UPF0301 (AlgH) family.</text>
</comment>
<organism>
    <name type="scientific">Aliivibrio fischeri (strain ATCC 700601 / ES114)</name>
    <name type="common">Vibrio fischeri</name>
    <dbReference type="NCBI Taxonomy" id="312309"/>
    <lineage>
        <taxon>Bacteria</taxon>
        <taxon>Pseudomonadati</taxon>
        <taxon>Pseudomonadota</taxon>
        <taxon>Gammaproteobacteria</taxon>
        <taxon>Vibrionales</taxon>
        <taxon>Vibrionaceae</taxon>
        <taxon>Aliivibrio</taxon>
    </lineage>
</organism>
<reference key="1">
    <citation type="journal article" date="2005" name="Proc. Natl. Acad. Sci. U.S.A.">
        <title>Complete genome sequence of Vibrio fischeri: a symbiotic bacterium with pathogenic congeners.</title>
        <authorList>
            <person name="Ruby E.G."/>
            <person name="Urbanowski M."/>
            <person name="Campbell J."/>
            <person name="Dunn A."/>
            <person name="Faini M."/>
            <person name="Gunsalus R."/>
            <person name="Lostroh P."/>
            <person name="Lupp C."/>
            <person name="McCann J."/>
            <person name="Millikan D."/>
            <person name="Schaefer A."/>
            <person name="Stabb E."/>
            <person name="Stevens A."/>
            <person name="Visick K."/>
            <person name="Whistler C."/>
            <person name="Greenberg E.P."/>
        </authorList>
    </citation>
    <scope>NUCLEOTIDE SEQUENCE [LARGE SCALE GENOMIC DNA]</scope>
    <source>
        <strain>ATCC 700601 / ES114</strain>
    </source>
</reference>
<dbReference type="EMBL" id="CP000020">
    <property type="protein sequence ID" value="AAW84929.1"/>
    <property type="molecule type" value="Genomic_DNA"/>
</dbReference>
<dbReference type="RefSeq" id="WP_005417575.1">
    <property type="nucleotide sequence ID" value="NZ_CAWLES010000001.1"/>
</dbReference>
<dbReference type="RefSeq" id="YP_203817.1">
    <property type="nucleotide sequence ID" value="NC_006840.2"/>
</dbReference>
<dbReference type="SMR" id="Q5E7R7"/>
<dbReference type="STRING" id="312309.VF_0434"/>
<dbReference type="EnsemblBacteria" id="AAW84929">
    <property type="protein sequence ID" value="AAW84929"/>
    <property type="gene ID" value="VF_0434"/>
</dbReference>
<dbReference type="GeneID" id="54163071"/>
<dbReference type="KEGG" id="vfi:VF_0434"/>
<dbReference type="PATRIC" id="fig|312309.11.peg.424"/>
<dbReference type="eggNOG" id="COG1678">
    <property type="taxonomic scope" value="Bacteria"/>
</dbReference>
<dbReference type="HOGENOM" id="CLU_057596_1_0_6"/>
<dbReference type="OrthoDB" id="9807486at2"/>
<dbReference type="Proteomes" id="UP000000537">
    <property type="component" value="Chromosome I"/>
</dbReference>
<dbReference type="GO" id="GO:0005829">
    <property type="term" value="C:cytosol"/>
    <property type="evidence" value="ECO:0007669"/>
    <property type="project" value="TreeGrafter"/>
</dbReference>
<dbReference type="Gene3D" id="3.40.1740.10">
    <property type="entry name" value="VC0467-like"/>
    <property type="match status" value="1"/>
</dbReference>
<dbReference type="HAMAP" id="MF_00758">
    <property type="entry name" value="UPF0301"/>
    <property type="match status" value="1"/>
</dbReference>
<dbReference type="InterPro" id="IPR003774">
    <property type="entry name" value="AlgH-like"/>
</dbReference>
<dbReference type="NCBIfam" id="NF001266">
    <property type="entry name" value="PRK00228.1-1"/>
    <property type="match status" value="1"/>
</dbReference>
<dbReference type="PANTHER" id="PTHR30327">
    <property type="entry name" value="UNCHARACTERIZED PROTEIN YQGE"/>
    <property type="match status" value="1"/>
</dbReference>
<dbReference type="PANTHER" id="PTHR30327:SF1">
    <property type="entry name" value="UPF0301 PROTEIN YQGE"/>
    <property type="match status" value="1"/>
</dbReference>
<dbReference type="Pfam" id="PF02622">
    <property type="entry name" value="DUF179"/>
    <property type="match status" value="1"/>
</dbReference>
<dbReference type="SUPFAM" id="SSF143456">
    <property type="entry name" value="VC0467-like"/>
    <property type="match status" value="1"/>
</dbReference>
<sequence>MNLKNHFLVAMPSMKDPFFQRSVIYICEHDSDGTMGLRINEPVQISLKGMLDQIELDNPSPIIFPQTLSQPVLNGGPVSDDRGFVLHSNKDNYLSSIQVTDELSVTTSKDILATLGTEYQPYKYLVALGYSGWEGGQLEKELSENTWLTLEADPSVIFDTPIPDRWRKALQLLGINPANLSSEIGHA</sequence>
<feature type="chain" id="PRO_0000258890" description="UPF0301 protein VF_0434">
    <location>
        <begin position="1"/>
        <end position="187"/>
    </location>
</feature>
<gene>
    <name type="ordered locus">VF_0434</name>
</gene>
<evidence type="ECO:0000255" key="1">
    <source>
        <dbReference type="HAMAP-Rule" id="MF_00758"/>
    </source>
</evidence>
<protein>
    <recommendedName>
        <fullName evidence="1">UPF0301 protein VF_0434</fullName>
    </recommendedName>
</protein>
<keyword id="KW-1185">Reference proteome</keyword>
<accession>Q5E7R7</accession>
<name>Y434_ALIF1</name>